<keyword id="KW-0150">Chloroplast</keyword>
<keyword id="KW-0275">Fatty acid biosynthesis</keyword>
<keyword id="KW-0276">Fatty acid metabolism</keyword>
<keyword id="KW-0378">Hydrolase</keyword>
<keyword id="KW-0444">Lipid biosynthesis</keyword>
<keyword id="KW-0443">Lipid metabolism</keyword>
<keyword id="KW-0934">Plastid</keyword>
<keyword id="KW-0809">Transit peptide</keyword>
<sequence>MVAAAASSAFFSFPTPGTSPKPGKFGNWPSSLSIPFNPKSNHNGGIQVKANASAHPKANGSAVSLKAGSLETQEDTSSPSPPPRTFISQLPDWSMLVSAITTVFVAAEKQWTMLDRKSKRPDVLVEPFVQDGVSFRQSFSIRSYEIGVDRTASIETLMNIFQETSLNHCKSLGLLNDGFGRTPEMCKRDLIWVVTKMQIEVNRYPTWGDTIEVTTWVSESGKNGMSRDWLISDCHSGEILIRATSVWAMMNQKTRRLSKIPDEVRQEIVPYFVDSAPVIEDDRKLHKLDVKTGDSIRNGLTPRWNDFDVNQHVNNVKYIAWLLKSVPTEVFETQELCGLTLEYRRECRRDSVLESVTAMDPSKEGDRSLYQHLLRLENGADIALGRTEWRPKNAGATGAVSTGKTSNGNSVS</sequence>
<evidence type="ECO:0000250" key="1">
    <source>
        <dbReference type="UniProtKB" id="Q41635"/>
    </source>
</evidence>
<evidence type="ECO:0000255" key="2"/>
<evidence type="ECO:0000256" key="3">
    <source>
        <dbReference type="SAM" id="MobiDB-lite"/>
    </source>
</evidence>
<evidence type="ECO:0000269" key="4">
    <source>
    </source>
</evidence>
<evidence type="ECO:0000303" key="5">
    <source>
    </source>
</evidence>
<evidence type="ECO:0000305" key="6"/>
<evidence type="ECO:0000305" key="7">
    <source>
    </source>
</evidence>
<name>FATB3_CUPVI</name>
<feature type="transit peptide" description="Chloroplast" evidence="2">
    <location>
        <begin position="1"/>
        <end position="50"/>
    </location>
</feature>
<feature type="chain" id="PRO_0000450103" description="Acyl-[acyl-carrier-protein] hydrolase FATB3, chloroplastic">
    <location>
        <begin position="51"/>
        <end position="412"/>
    </location>
</feature>
<feature type="region of interest" description="Disordered" evidence="3">
    <location>
        <begin position="1"/>
        <end position="63"/>
    </location>
</feature>
<feature type="region of interest" description="Disordered" evidence="3">
    <location>
        <begin position="393"/>
        <end position="412"/>
    </location>
</feature>
<feature type="compositionally biased region" description="Low complexity" evidence="3">
    <location>
        <begin position="1"/>
        <end position="25"/>
    </location>
</feature>
<feature type="compositionally biased region" description="Polar residues" evidence="3">
    <location>
        <begin position="28"/>
        <end position="44"/>
    </location>
</feature>
<feature type="compositionally biased region" description="Polar residues" evidence="3">
    <location>
        <begin position="399"/>
        <end position="412"/>
    </location>
</feature>
<feature type="active site" evidence="1">
    <location>
        <position position="310"/>
    </location>
</feature>
<feature type="active site" evidence="1">
    <location>
        <position position="312"/>
    </location>
</feature>
<feature type="active site" evidence="2">
    <location>
        <position position="347"/>
    </location>
</feature>
<organism>
    <name type="scientific">Cuphea viscosissima</name>
    <name type="common">Blue waxweed</name>
    <dbReference type="NCBI Taxonomy" id="857185"/>
    <lineage>
        <taxon>Eukaryota</taxon>
        <taxon>Viridiplantae</taxon>
        <taxon>Streptophyta</taxon>
        <taxon>Embryophyta</taxon>
        <taxon>Tracheophyta</taxon>
        <taxon>Spermatophyta</taxon>
        <taxon>Magnoliopsida</taxon>
        <taxon>eudicotyledons</taxon>
        <taxon>Gunneridae</taxon>
        <taxon>Pentapetalae</taxon>
        <taxon>rosids</taxon>
        <taxon>malvids</taxon>
        <taxon>Myrtales</taxon>
        <taxon>Lythraceae</taxon>
        <taxon>Cuphea</taxon>
    </lineage>
</organism>
<proteinExistence type="evidence at protein level"/>
<dbReference type="EC" id="3.1.2.-" evidence="4"/>
<dbReference type="EMBL" id="JF338908">
    <property type="protein sequence ID" value="AEM72524.1"/>
    <property type="molecule type" value="mRNA"/>
</dbReference>
<dbReference type="SMR" id="G3ESV1"/>
<dbReference type="GO" id="GO:0009507">
    <property type="term" value="C:chloroplast"/>
    <property type="evidence" value="ECO:0007669"/>
    <property type="project" value="UniProtKB-SubCell"/>
</dbReference>
<dbReference type="GO" id="GO:0000036">
    <property type="term" value="F:acyl carrier activity"/>
    <property type="evidence" value="ECO:0007669"/>
    <property type="project" value="TreeGrafter"/>
</dbReference>
<dbReference type="GO" id="GO:0016297">
    <property type="term" value="F:fatty acyl-[ACP] hydrolase activity"/>
    <property type="evidence" value="ECO:0007669"/>
    <property type="project" value="InterPro"/>
</dbReference>
<dbReference type="CDD" id="cd00586">
    <property type="entry name" value="4HBT"/>
    <property type="match status" value="1"/>
</dbReference>
<dbReference type="FunFam" id="3.10.129.10:FF:000014">
    <property type="entry name" value="Acyl-[acyl-carrier-protein] hydrolase"/>
    <property type="match status" value="1"/>
</dbReference>
<dbReference type="Gene3D" id="3.10.129.10">
    <property type="entry name" value="Hotdog Thioesterase"/>
    <property type="match status" value="1"/>
</dbReference>
<dbReference type="InterPro" id="IPR021113">
    <property type="entry name" value="Acyl-ACP-thioesterase_N"/>
</dbReference>
<dbReference type="InterPro" id="IPR049427">
    <property type="entry name" value="Acyl-ACP_TE_C"/>
</dbReference>
<dbReference type="InterPro" id="IPR002864">
    <property type="entry name" value="Acyl-ACP_thioesterase_NHD"/>
</dbReference>
<dbReference type="InterPro" id="IPR045023">
    <property type="entry name" value="FATA/B"/>
</dbReference>
<dbReference type="InterPro" id="IPR029069">
    <property type="entry name" value="HotDog_dom_sf"/>
</dbReference>
<dbReference type="PANTHER" id="PTHR31727">
    <property type="entry name" value="OLEOYL-ACYL CARRIER PROTEIN THIOESTERASE 1, CHLOROPLASTIC"/>
    <property type="match status" value="1"/>
</dbReference>
<dbReference type="PANTHER" id="PTHR31727:SF2">
    <property type="entry name" value="PALMITOYL-ACYL CARRIER PROTEIN THIOESTERASE, CHLOROPLASTIC"/>
    <property type="match status" value="1"/>
</dbReference>
<dbReference type="Pfam" id="PF01643">
    <property type="entry name" value="Acyl-ACP_TE"/>
    <property type="match status" value="1"/>
</dbReference>
<dbReference type="Pfam" id="PF20791">
    <property type="entry name" value="Acyl-ACP_TE_C"/>
    <property type="match status" value="1"/>
</dbReference>
<dbReference type="Pfam" id="PF12590">
    <property type="entry name" value="Acyl-thio_N"/>
    <property type="match status" value="1"/>
</dbReference>
<dbReference type="SUPFAM" id="SSF54637">
    <property type="entry name" value="Thioesterase/thiol ester dehydrase-isomerase"/>
    <property type="match status" value="2"/>
</dbReference>
<protein>
    <recommendedName>
        <fullName evidence="6">Acyl-[acyl-carrier-protein] hydrolase FATB3, chloroplastic</fullName>
        <shortName evidence="5">CvFatB3</shortName>
        <ecNumber evidence="4">3.1.2.-</ecNumber>
    </recommendedName>
    <alternativeName>
        <fullName evidence="7">Myristoyl-[acyl-carrier-protein] thioesterase</fullName>
    </alternativeName>
</protein>
<gene>
    <name evidence="5" type="primary">FATB3</name>
</gene>
<accession>G3ESV1</accession>
<reference key="1">
    <citation type="journal article" date="2011" name="BMC Biochem.">
        <title>Phylogenetic and experimental characterization of an acyl-ACP thioesterase family reveals significant diversity in enzymatic specificity and activity.</title>
        <authorList>
            <person name="Jing F."/>
            <person name="Cantu D.C."/>
            <person name="Tvaruzkova J."/>
            <person name="Chipman J.P."/>
            <person name="Nikolau B.J."/>
            <person name="Yandeau-Nelson M.D."/>
            <person name="Reilly P.J."/>
        </authorList>
    </citation>
    <scope>NUCLEOTIDE SEQUENCE [MRNA]</scope>
    <scope>FUNCTION</scope>
    <scope>CATALYTIC ACTIVITY</scope>
</reference>
<comment type="function">
    <text evidence="4 7">Plays an essential role in chain termination during de novo fatty acid synthesis (Probable). Possesses thioesterase activity for medium chain acyl-ACPs. Main substrate is 14:0 (PubMed:21831316).</text>
</comment>
<comment type="catalytic activity">
    <reaction evidence="4">
        <text>tetradecanoyl-[ACP] + H2O = tetradecanoate + holo-[ACP] + H(+)</text>
        <dbReference type="Rhea" id="RHEA:30123"/>
        <dbReference type="Rhea" id="RHEA-COMP:9648"/>
        <dbReference type="Rhea" id="RHEA-COMP:9685"/>
        <dbReference type="ChEBI" id="CHEBI:15377"/>
        <dbReference type="ChEBI" id="CHEBI:15378"/>
        <dbReference type="ChEBI" id="CHEBI:30807"/>
        <dbReference type="ChEBI" id="CHEBI:64479"/>
        <dbReference type="ChEBI" id="CHEBI:78477"/>
    </reaction>
    <physiologicalReaction direction="left-to-right" evidence="4">
        <dbReference type="Rhea" id="RHEA:30124"/>
    </physiologicalReaction>
</comment>
<comment type="subcellular location">
    <subcellularLocation>
        <location evidence="2">Plastid</location>
        <location evidence="2">Chloroplast</location>
    </subcellularLocation>
</comment>
<comment type="similarity">
    <text evidence="6">Belongs to the acyl-ACP thioesterase family.</text>
</comment>